<organism>
    <name type="scientific">Francisella tularensis subsp. novicida (strain U112)</name>
    <dbReference type="NCBI Taxonomy" id="401614"/>
    <lineage>
        <taxon>Bacteria</taxon>
        <taxon>Pseudomonadati</taxon>
        <taxon>Pseudomonadota</taxon>
        <taxon>Gammaproteobacteria</taxon>
        <taxon>Thiotrichales</taxon>
        <taxon>Francisellaceae</taxon>
        <taxon>Francisella</taxon>
    </lineage>
</organism>
<reference key="1">
    <citation type="journal article" date="2007" name="Genome Biol.">
        <title>Comparison of Francisella tularensis genomes reveals evolutionary events associated with the emergence of human pathogenic strains.</title>
        <authorList>
            <person name="Rohmer L."/>
            <person name="Fong C."/>
            <person name="Abmayr S."/>
            <person name="Wasnick M."/>
            <person name="Larson Freeman T.J."/>
            <person name="Radey M."/>
            <person name="Guina T."/>
            <person name="Svensson K."/>
            <person name="Hayden H.S."/>
            <person name="Jacobs M."/>
            <person name="Gallagher L.A."/>
            <person name="Manoil C."/>
            <person name="Ernst R.K."/>
            <person name="Drees B."/>
            <person name="Buckley D."/>
            <person name="Haugen E."/>
            <person name="Bovee D."/>
            <person name="Zhou Y."/>
            <person name="Chang J."/>
            <person name="Levy R."/>
            <person name="Lim R."/>
            <person name="Gillett W."/>
            <person name="Guenthener D."/>
            <person name="Kang A."/>
            <person name="Shaffer S.A."/>
            <person name="Taylor G."/>
            <person name="Chen J."/>
            <person name="Gallis B."/>
            <person name="D'Argenio D.A."/>
            <person name="Forsman M."/>
            <person name="Olson M.V."/>
            <person name="Goodlett D.R."/>
            <person name="Kaul R."/>
            <person name="Miller S.I."/>
            <person name="Brittnacher M.J."/>
        </authorList>
    </citation>
    <scope>NUCLEOTIDE SEQUENCE [LARGE SCALE GENOMIC DNA]</scope>
    <source>
        <strain>U112</strain>
    </source>
</reference>
<keyword id="KW-0687">Ribonucleoprotein</keyword>
<keyword id="KW-0689">Ribosomal protein</keyword>
<keyword id="KW-0694">RNA-binding</keyword>
<keyword id="KW-0699">rRNA-binding</keyword>
<proteinExistence type="inferred from homology"/>
<accession>A0Q6H4</accession>
<protein>
    <recommendedName>
        <fullName evidence="1">Small ribosomal subunit protein bS6</fullName>
    </recommendedName>
    <alternativeName>
        <fullName evidence="2">30S ribosomal protein S6</fullName>
    </alternativeName>
</protein>
<comment type="function">
    <text evidence="1">Binds together with bS18 to 16S ribosomal RNA.</text>
</comment>
<comment type="similarity">
    <text evidence="1">Belongs to the bacterial ribosomal protein bS6 family.</text>
</comment>
<feature type="chain" id="PRO_1000005265" description="Small ribosomal subunit protein bS6">
    <location>
        <begin position="1"/>
        <end position="111"/>
    </location>
</feature>
<evidence type="ECO:0000255" key="1">
    <source>
        <dbReference type="HAMAP-Rule" id="MF_00360"/>
    </source>
</evidence>
<evidence type="ECO:0000305" key="2"/>
<name>RS6_FRATN</name>
<gene>
    <name evidence="1" type="primary">rpsF</name>
    <name type="ordered locus">FTN_0951</name>
</gene>
<sequence length="111" mass="13054">MKHYEVVLMIHPDQSDQLDAMLGKYRGIIEEKGGKIHRFEDWGRRQLAYPIEKLHKAHYVLFNIECPTESLEKLQESLRYNDAILRRLVIATKEAITEPSVMMESNEKEVI</sequence>
<dbReference type="EMBL" id="CP000439">
    <property type="protein sequence ID" value="ABK89839.1"/>
    <property type="molecule type" value="Genomic_DNA"/>
</dbReference>
<dbReference type="RefSeq" id="WP_003015897.1">
    <property type="nucleotide sequence ID" value="NZ_CP009633.1"/>
</dbReference>
<dbReference type="SMR" id="A0Q6H4"/>
<dbReference type="KEGG" id="ftn:FTN_0951"/>
<dbReference type="KEGG" id="ftx:AW25_1061"/>
<dbReference type="BioCyc" id="FTUL401614:G1G75-991-MONOMER"/>
<dbReference type="Proteomes" id="UP000000762">
    <property type="component" value="Chromosome"/>
</dbReference>
<dbReference type="GO" id="GO:0022627">
    <property type="term" value="C:cytosolic small ribosomal subunit"/>
    <property type="evidence" value="ECO:0007669"/>
    <property type="project" value="TreeGrafter"/>
</dbReference>
<dbReference type="GO" id="GO:0070181">
    <property type="term" value="F:small ribosomal subunit rRNA binding"/>
    <property type="evidence" value="ECO:0007669"/>
    <property type="project" value="TreeGrafter"/>
</dbReference>
<dbReference type="GO" id="GO:0003735">
    <property type="term" value="F:structural constituent of ribosome"/>
    <property type="evidence" value="ECO:0007669"/>
    <property type="project" value="InterPro"/>
</dbReference>
<dbReference type="GO" id="GO:0006412">
    <property type="term" value="P:translation"/>
    <property type="evidence" value="ECO:0007669"/>
    <property type="project" value="UniProtKB-UniRule"/>
</dbReference>
<dbReference type="CDD" id="cd00473">
    <property type="entry name" value="bS6"/>
    <property type="match status" value="1"/>
</dbReference>
<dbReference type="Gene3D" id="3.30.70.60">
    <property type="match status" value="1"/>
</dbReference>
<dbReference type="HAMAP" id="MF_00360">
    <property type="entry name" value="Ribosomal_bS6"/>
    <property type="match status" value="1"/>
</dbReference>
<dbReference type="InterPro" id="IPR000529">
    <property type="entry name" value="Ribosomal_bS6"/>
</dbReference>
<dbReference type="InterPro" id="IPR035980">
    <property type="entry name" value="Ribosomal_bS6_sf"/>
</dbReference>
<dbReference type="InterPro" id="IPR020814">
    <property type="entry name" value="Ribosomal_S6_plastid/chlpt"/>
</dbReference>
<dbReference type="InterPro" id="IPR014717">
    <property type="entry name" value="Transl_elong_EF1B/ribsomal_bS6"/>
</dbReference>
<dbReference type="NCBIfam" id="TIGR00166">
    <property type="entry name" value="S6"/>
    <property type="match status" value="1"/>
</dbReference>
<dbReference type="PANTHER" id="PTHR21011">
    <property type="entry name" value="MITOCHONDRIAL 28S RIBOSOMAL PROTEIN S6"/>
    <property type="match status" value="1"/>
</dbReference>
<dbReference type="PANTHER" id="PTHR21011:SF1">
    <property type="entry name" value="SMALL RIBOSOMAL SUBUNIT PROTEIN BS6M"/>
    <property type="match status" value="1"/>
</dbReference>
<dbReference type="Pfam" id="PF01250">
    <property type="entry name" value="Ribosomal_S6"/>
    <property type="match status" value="1"/>
</dbReference>
<dbReference type="SUPFAM" id="SSF54995">
    <property type="entry name" value="Ribosomal protein S6"/>
    <property type="match status" value="1"/>
</dbReference>